<reference key="1">
    <citation type="submission" date="2008-06" db="EMBL/GenBank/DDBJ databases">
        <title>Complete sequence of Stenotrophomonas maltophilia R551-3.</title>
        <authorList>
            <consortium name="US DOE Joint Genome Institute"/>
            <person name="Lucas S."/>
            <person name="Copeland A."/>
            <person name="Lapidus A."/>
            <person name="Glavina del Rio T."/>
            <person name="Dalin E."/>
            <person name="Tice H."/>
            <person name="Pitluck S."/>
            <person name="Chain P."/>
            <person name="Malfatti S."/>
            <person name="Shin M."/>
            <person name="Vergez L."/>
            <person name="Lang D."/>
            <person name="Schmutz J."/>
            <person name="Larimer F."/>
            <person name="Land M."/>
            <person name="Hauser L."/>
            <person name="Kyrpides N."/>
            <person name="Mikhailova N."/>
            <person name="Taghavi S."/>
            <person name="Monchy S."/>
            <person name="Newman L."/>
            <person name="Vangronsveld J."/>
            <person name="van der Lelie D."/>
            <person name="Richardson P."/>
        </authorList>
    </citation>
    <scope>NUCLEOTIDE SEQUENCE [LARGE SCALE GENOMIC DNA]</scope>
    <source>
        <strain>R551-3</strain>
    </source>
</reference>
<protein>
    <recommendedName>
        <fullName evidence="1">3-deoxy-D-manno-octulosonic acid kinase</fullName>
        <shortName evidence="1">Kdo kinase</shortName>
        <ecNumber evidence="1">2.7.1.166</ecNumber>
    </recommendedName>
</protein>
<sequence length="249" mass="28472">MVAFDANEALTPCREGRGIGAILFDRERLRQAEADLFSPQHWGSKARPVGEGGRGSAWFIDAPFGASVLRHYLRGGLAAKISHDQYLWRGADRTRSFAEFRLMRALREKKLPVPRPLAAFYMREGLRYRAAILMERIEGVRSLADRALVAGRGAPWEETGRLIARFHRAGLDHADLNAHNILFDGNGHGWLIDFDRGVIRIPATAWRERNLKRLLRSLIKLRGERSVEDVQKDYVRLRRAYDMAWNRGT</sequence>
<proteinExistence type="inferred from homology"/>
<comment type="function">
    <text evidence="1">Catalyzes the ATP-dependent phosphorylation of the 3-deoxy-D-manno-octulosonic acid (Kdo) residue in Kdo-lipid IV(A) at the 4-OH position.</text>
</comment>
<comment type="catalytic activity">
    <reaction evidence="1">
        <text>an alpha-Kdo-(2-&gt;6)-lipid IVA + ATP = a 4-O-phospho-alpha-Kdo-(2-&gt;6)-lipid IVA + ADP + H(+)</text>
        <dbReference type="Rhea" id="RHEA:74271"/>
        <dbReference type="ChEBI" id="CHEBI:15378"/>
        <dbReference type="ChEBI" id="CHEBI:30616"/>
        <dbReference type="ChEBI" id="CHEBI:176428"/>
        <dbReference type="ChEBI" id="CHEBI:193140"/>
        <dbReference type="ChEBI" id="CHEBI:456216"/>
        <dbReference type="EC" id="2.7.1.166"/>
    </reaction>
</comment>
<comment type="pathway">
    <text evidence="1">Bacterial outer membrane biogenesis; LPS core biosynthesis.</text>
</comment>
<comment type="subcellular location">
    <subcellularLocation>
        <location evidence="1">Cell inner membrane</location>
        <topology evidence="1">Peripheral membrane protein</topology>
        <orientation evidence="1">Cytoplasmic side</orientation>
    </subcellularLocation>
</comment>
<comment type="similarity">
    <text evidence="1">Belongs to the protein kinase superfamily. KdkA/RfaP family.</text>
</comment>
<accession>B4SLP5</accession>
<feature type="chain" id="PRO_1000200653" description="3-deoxy-D-manno-octulosonic acid kinase">
    <location>
        <begin position="1"/>
        <end position="249"/>
    </location>
</feature>
<feature type="active site" evidence="1">
    <location>
        <position position="175"/>
    </location>
</feature>
<name>KDKA_STRM5</name>
<keyword id="KW-0067">ATP-binding</keyword>
<keyword id="KW-0997">Cell inner membrane</keyword>
<keyword id="KW-1003">Cell membrane</keyword>
<keyword id="KW-0418">Kinase</keyword>
<keyword id="KW-0448">Lipopolysaccharide biosynthesis</keyword>
<keyword id="KW-0472">Membrane</keyword>
<keyword id="KW-0547">Nucleotide-binding</keyword>
<keyword id="KW-0808">Transferase</keyword>
<dbReference type="EC" id="2.7.1.166" evidence="1"/>
<dbReference type="EMBL" id="CP001111">
    <property type="protein sequence ID" value="ACF50555.1"/>
    <property type="molecule type" value="Genomic_DNA"/>
</dbReference>
<dbReference type="RefSeq" id="WP_012510203.1">
    <property type="nucleotide sequence ID" value="NC_011071.1"/>
</dbReference>
<dbReference type="SMR" id="B4SLP5"/>
<dbReference type="STRING" id="391008.Smal_0850"/>
<dbReference type="KEGG" id="smt:Smal_0850"/>
<dbReference type="eggNOG" id="COG3642">
    <property type="taxonomic scope" value="Bacteria"/>
</dbReference>
<dbReference type="HOGENOM" id="CLU_094226_0_0_6"/>
<dbReference type="OrthoDB" id="6854449at2"/>
<dbReference type="UniPathway" id="UPA00958"/>
<dbReference type="Proteomes" id="UP000001867">
    <property type="component" value="Chromosome"/>
</dbReference>
<dbReference type="GO" id="GO:0005829">
    <property type="term" value="C:cytosol"/>
    <property type="evidence" value="ECO:0007669"/>
    <property type="project" value="TreeGrafter"/>
</dbReference>
<dbReference type="GO" id="GO:0005886">
    <property type="term" value="C:plasma membrane"/>
    <property type="evidence" value="ECO:0007669"/>
    <property type="project" value="UniProtKB-SubCell"/>
</dbReference>
<dbReference type="GO" id="GO:0030688">
    <property type="term" value="C:preribosome, small subunit precursor"/>
    <property type="evidence" value="ECO:0007669"/>
    <property type="project" value="TreeGrafter"/>
</dbReference>
<dbReference type="GO" id="GO:0005524">
    <property type="term" value="F:ATP binding"/>
    <property type="evidence" value="ECO:0007669"/>
    <property type="project" value="UniProtKB-UniRule"/>
</dbReference>
<dbReference type="GO" id="GO:0004672">
    <property type="term" value="F:protein kinase activity"/>
    <property type="evidence" value="ECO:0007669"/>
    <property type="project" value="TreeGrafter"/>
</dbReference>
<dbReference type="GO" id="GO:0009244">
    <property type="term" value="P:lipopolysaccharide core region biosynthetic process"/>
    <property type="evidence" value="ECO:0007669"/>
    <property type="project" value="UniProtKB-UniRule"/>
</dbReference>
<dbReference type="GO" id="GO:0030490">
    <property type="term" value="P:maturation of SSU-rRNA"/>
    <property type="evidence" value="ECO:0007669"/>
    <property type="project" value="TreeGrafter"/>
</dbReference>
<dbReference type="Gene3D" id="1.10.510.10">
    <property type="entry name" value="Transferase(Phosphotransferase) domain 1"/>
    <property type="match status" value="1"/>
</dbReference>
<dbReference type="HAMAP" id="MF_00521">
    <property type="entry name" value="KDO_kinase"/>
    <property type="match status" value="1"/>
</dbReference>
<dbReference type="InterPro" id="IPR022826">
    <property type="entry name" value="KDO_kinase"/>
</dbReference>
<dbReference type="InterPro" id="IPR011009">
    <property type="entry name" value="Kinase-like_dom_sf"/>
</dbReference>
<dbReference type="NCBIfam" id="NF002475">
    <property type="entry name" value="PRK01723.1"/>
    <property type="match status" value="1"/>
</dbReference>
<dbReference type="PANTHER" id="PTHR45852">
    <property type="entry name" value="SER/THR-PROTEIN KINASE RIO2"/>
    <property type="match status" value="1"/>
</dbReference>
<dbReference type="PANTHER" id="PTHR45852:SF1">
    <property type="entry name" value="SERINE_THREONINE-PROTEIN KINASE RIO2"/>
    <property type="match status" value="1"/>
</dbReference>
<dbReference type="Pfam" id="PF06293">
    <property type="entry name" value="Kdo"/>
    <property type="match status" value="1"/>
</dbReference>
<dbReference type="SUPFAM" id="SSF56112">
    <property type="entry name" value="Protein kinase-like (PK-like)"/>
    <property type="match status" value="1"/>
</dbReference>
<organism>
    <name type="scientific">Stenotrophomonas maltophilia (strain R551-3)</name>
    <dbReference type="NCBI Taxonomy" id="391008"/>
    <lineage>
        <taxon>Bacteria</taxon>
        <taxon>Pseudomonadati</taxon>
        <taxon>Pseudomonadota</taxon>
        <taxon>Gammaproteobacteria</taxon>
        <taxon>Lysobacterales</taxon>
        <taxon>Lysobacteraceae</taxon>
        <taxon>Stenotrophomonas</taxon>
        <taxon>Stenotrophomonas maltophilia group</taxon>
    </lineage>
</organism>
<gene>
    <name evidence="1" type="primary">kdkA</name>
    <name type="ordered locus">Smal_0850</name>
</gene>
<evidence type="ECO:0000255" key="1">
    <source>
        <dbReference type="HAMAP-Rule" id="MF_00521"/>
    </source>
</evidence>